<proteinExistence type="evidence at transcript level"/>
<accession>Q9M4S8</accession>
<organism>
    <name type="scientific">Fragaria ananassa</name>
    <name type="common">Strawberry</name>
    <name type="synonym">Fragaria chiloensis x Fragaria virginiana</name>
    <dbReference type="NCBI Taxonomy" id="3747"/>
    <lineage>
        <taxon>Eukaryota</taxon>
        <taxon>Viridiplantae</taxon>
        <taxon>Streptophyta</taxon>
        <taxon>Embryophyta</taxon>
        <taxon>Tracheophyta</taxon>
        <taxon>Spermatophyta</taxon>
        <taxon>Magnoliopsida</taxon>
        <taxon>eudicotyledons</taxon>
        <taxon>Gunneridae</taxon>
        <taxon>Pentapetalae</taxon>
        <taxon>rosids</taxon>
        <taxon>fabids</taxon>
        <taxon>Rosales</taxon>
        <taxon>Rosaceae</taxon>
        <taxon>Rosoideae</taxon>
        <taxon>Potentilleae</taxon>
        <taxon>Fragariinae</taxon>
        <taxon>Fragaria</taxon>
    </lineage>
</organism>
<protein>
    <recommendedName>
        <fullName>Triosephosphate isomerase, chloroplastic</fullName>
        <shortName>TIM</shortName>
        <shortName>Triose-phosphate isomerase</shortName>
        <ecNumber>5.3.1.1</ecNumber>
    </recommendedName>
</protein>
<dbReference type="EC" id="5.3.1.1"/>
<dbReference type="EMBL" id="AF257322">
    <property type="protein sequence ID" value="AAF66071.1"/>
    <property type="molecule type" value="mRNA"/>
</dbReference>
<dbReference type="SMR" id="Q9M4S8"/>
<dbReference type="UniPathway" id="UPA00116"/>
<dbReference type="GO" id="GO:0009507">
    <property type="term" value="C:chloroplast"/>
    <property type="evidence" value="ECO:0007669"/>
    <property type="project" value="UniProtKB-SubCell"/>
</dbReference>
<dbReference type="GO" id="GO:0005829">
    <property type="term" value="C:cytosol"/>
    <property type="evidence" value="ECO:0007669"/>
    <property type="project" value="TreeGrafter"/>
</dbReference>
<dbReference type="GO" id="GO:0004807">
    <property type="term" value="F:triose-phosphate isomerase activity"/>
    <property type="evidence" value="ECO:0007669"/>
    <property type="project" value="UniProtKB-EC"/>
</dbReference>
<dbReference type="GO" id="GO:0006094">
    <property type="term" value="P:gluconeogenesis"/>
    <property type="evidence" value="ECO:0007669"/>
    <property type="project" value="TreeGrafter"/>
</dbReference>
<dbReference type="GO" id="GO:0046166">
    <property type="term" value="P:glyceraldehyde-3-phosphate biosynthetic process"/>
    <property type="evidence" value="ECO:0007669"/>
    <property type="project" value="TreeGrafter"/>
</dbReference>
<dbReference type="GO" id="GO:0019563">
    <property type="term" value="P:glycerol catabolic process"/>
    <property type="evidence" value="ECO:0007669"/>
    <property type="project" value="TreeGrafter"/>
</dbReference>
<dbReference type="GO" id="GO:0006096">
    <property type="term" value="P:glycolytic process"/>
    <property type="evidence" value="ECO:0007669"/>
    <property type="project" value="InterPro"/>
</dbReference>
<dbReference type="GO" id="GO:0019253">
    <property type="term" value="P:reductive pentose-phosphate cycle"/>
    <property type="evidence" value="ECO:0007669"/>
    <property type="project" value="UniProtKB-UniPathway"/>
</dbReference>
<dbReference type="CDD" id="cd00311">
    <property type="entry name" value="TIM"/>
    <property type="match status" value="1"/>
</dbReference>
<dbReference type="FunFam" id="3.20.20.70:FF:000025">
    <property type="entry name" value="Triosephosphate isomerase"/>
    <property type="match status" value="1"/>
</dbReference>
<dbReference type="Gene3D" id="3.20.20.70">
    <property type="entry name" value="Aldolase class I"/>
    <property type="match status" value="1"/>
</dbReference>
<dbReference type="HAMAP" id="MF_00147_B">
    <property type="entry name" value="TIM_B"/>
    <property type="match status" value="1"/>
</dbReference>
<dbReference type="InterPro" id="IPR013785">
    <property type="entry name" value="Aldolase_TIM"/>
</dbReference>
<dbReference type="InterPro" id="IPR035990">
    <property type="entry name" value="TIM_sf"/>
</dbReference>
<dbReference type="InterPro" id="IPR022896">
    <property type="entry name" value="TrioseP_Isoase_bac/euk"/>
</dbReference>
<dbReference type="InterPro" id="IPR000652">
    <property type="entry name" value="Triosephosphate_isomerase"/>
</dbReference>
<dbReference type="InterPro" id="IPR020861">
    <property type="entry name" value="Triosephosphate_isomerase_AS"/>
</dbReference>
<dbReference type="NCBIfam" id="TIGR00419">
    <property type="entry name" value="tim"/>
    <property type="match status" value="1"/>
</dbReference>
<dbReference type="PANTHER" id="PTHR21139">
    <property type="entry name" value="TRIOSEPHOSPHATE ISOMERASE"/>
    <property type="match status" value="1"/>
</dbReference>
<dbReference type="PANTHER" id="PTHR21139:SF2">
    <property type="entry name" value="TRIOSEPHOSPHATE ISOMERASE"/>
    <property type="match status" value="1"/>
</dbReference>
<dbReference type="Pfam" id="PF00121">
    <property type="entry name" value="TIM"/>
    <property type="match status" value="1"/>
</dbReference>
<dbReference type="SUPFAM" id="SSF51351">
    <property type="entry name" value="Triosephosphate isomerase (TIM)"/>
    <property type="match status" value="1"/>
</dbReference>
<dbReference type="PROSITE" id="PS00171">
    <property type="entry name" value="TIM_1"/>
    <property type="match status" value="1"/>
</dbReference>
<dbReference type="PROSITE" id="PS51440">
    <property type="entry name" value="TIM_2"/>
    <property type="match status" value="1"/>
</dbReference>
<evidence type="ECO:0000250" key="1"/>
<evidence type="ECO:0000256" key="2">
    <source>
        <dbReference type="SAM" id="MobiDB-lite"/>
    </source>
</evidence>
<evidence type="ECO:0000305" key="3"/>
<gene>
    <name type="primary">TPI</name>
</gene>
<sequence length="314" mass="33526">MAVASTSLASQLSGPKSLSQPYSGLRRSCPKLDQSHSSLFQHLSLSSSSRKASRAVVAMAGTGKFFVGGNWKCNGTKDLISKLVSDLNSAKLEPDVDVVVAPPFLYLDQVKSSLTDRIEISGQNSWVAKGGAFTGEISVEQLKDIGRKWVILGHSERRHVIGEDDQFIGKKAAYALNEGLGVIACIGEKLEEREAGKTFDVCYEQLKAFADAVPSWENIVVAYEPVWAIGTGKVASPQQAQEVHVAVREWLKKNVSAEVASKTRIIYGGSVNGGNSAELAKEEDIDGFLVGGASLKGPEFATIVNAVTSKKVAA</sequence>
<name>TPIC_FRAAN</name>
<comment type="catalytic activity">
    <reaction>
        <text>D-glyceraldehyde 3-phosphate = dihydroxyacetone phosphate</text>
        <dbReference type="Rhea" id="RHEA:18585"/>
        <dbReference type="ChEBI" id="CHEBI:57642"/>
        <dbReference type="ChEBI" id="CHEBI:59776"/>
        <dbReference type="EC" id="5.3.1.1"/>
    </reaction>
</comment>
<comment type="pathway">
    <text>Carbohydrate biosynthesis; Calvin cycle.</text>
</comment>
<comment type="subunit">
    <text evidence="1">Homodimer.</text>
</comment>
<comment type="subcellular location">
    <subcellularLocation>
        <location evidence="1">Plastid</location>
        <location evidence="1">Chloroplast</location>
    </subcellularLocation>
</comment>
<comment type="miscellaneous">
    <text>In plants, there are two types of TPIS, cytosolic and plastid.</text>
</comment>
<comment type="similarity">
    <text evidence="3">Belongs to the triosephosphate isomerase family.</text>
</comment>
<reference key="1">
    <citation type="submission" date="2000-04" db="EMBL/GenBank/DDBJ databases">
        <title>Cloning of a strawberry gene encoding a chloroplast triosephosphate isomerase.</title>
        <authorList>
            <person name="Kim I.-J."/>
            <person name="Chung W.-I."/>
        </authorList>
    </citation>
    <scope>NUCLEOTIDE SEQUENCE [MRNA]</scope>
    <source>
        <strain>cv. Duch.</strain>
    </source>
</reference>
<keyword id="KW-0113">Calvin cycle</keyword>
<keyword id="KW-0150">Chloroplast</keyword>
<keyword id="KW-0413">Isomerase</keyword>
<keyword id="KW-0934">Plastid</keyword>
<keyword id="KW-0809">Transit peptide</keyword>
<feature type="transit peptide" description="Chloroplast" evidence="1">
    <location>
        <begin position="1"/>
        <end position="59"/>
    </location>
</feature>
<feature type="chain" id="PRO_0000035650" description="Triosephosphate isomerase, chloroplastic">
    <location>
        <begin position="60"/>
        <end position="314"/>
    </location>
</feature>
<feature type="region of interest" description="Disordered" evidence="2">
    <location>
        <begin position="1"/>
        <end position="25"/>
    </location>
</feature>
<feature type="compositionally biased region" description="Polar residues" evidence="2">
    <location>
        <begin position="1"/>
        <end position="22"/>
    </location>
</feature>
<feature type="active site" description="Electrophile" evidence="1">
    <location>
        <position position="154"/>
    </location>
</feature>
<feature type="active site" description="Proton acceptor" evidence="1">
    <location>
        <position position="224"/>
    </location>
</feature>
<feature type="binding site" evidence="1">
    <location>
        <position position="70"/>
    </location>
    <ligand>
        <name>substrate</name>
    </ligand>
</feature>
<feature type="binding site" evidence="1">
    <location>
        <position position="72"/>
    </location>
    <ligand>
        <name>substrate</name>
    </ligand>
</feature>